<proteinExistence type="uncertain"/>
<keyword id="KW-1185">Reference proteome</keyword>
<name>VBPC1_HUMAN</name>
<accession>Q6Q795</accession>
<sequence length="121" mass="13358">MEEVIQAGLAQWSRQKGLALPWDRTRGHPDVPWRNLTSSPTRPLAQPAGSCMPAEPSPAAHYHQLHVHLQLLPSDLSERPGLRLAPLALVEVGMTLPVPQTPLPHVTQQQKLAPGRQLCPW</sequence>
<evidence type="ECO:0000256" key="1">
    <source>
        <dbReference type="SAM" id="MobiDB-lite"/>
    </source>
</evidence>
<evidence type="ECO:0000269" key="2">
    <source>
    </source>
</evidence>
<evidence type="ECO:0000305" key="3"/>
<reference key="1">
    <citation type="journal article" date="2006" name="World J. Gastroenterol.">
        <title>Screening and identification of interacting proteins with hepatitis B virus core protein in leukocytes and cloning of new gene C1.</title>
        <authorList>
            <person name="Lin S.-M."/>
            <person name="Cheng J."/>
            <person name="Lu Y.-Y."/>
            <person name="Zhang S.L."/>
            <person name="Yang Q."/>
            <person name="Chen T.-Y."/>
            <person name="Liu M."/>
            <person name="Wang L."/>
        </authorList>
    </citation>
    <scope>NUCLEOTIDE SEQUENCE [MRNA]</scope>
    <scope>INTERACTION WITH HBV CORE PROTEIN</scope>
</reference>
<dbReference type="EMBL" id="AY555145">
    <property type="protein sequence ID" value="AAS64576.1"/>
    <property type="molecule type" value="mRNA"/>
</dbReference>
<dbReference type="IntAct" id="Q6Q795">
    <property type="interactions" value="1"/>
</dbReference>
<dbReference type="BioMuta" id="-"/>
<dbReference type="neXtProt" id="NX_Q6Q795"/>
<dbReference type="InParanoid" id="Q6Q795"/>
<dbReference type="PAN-GO" id="Q6Q795">
    <property type="GO annotations" value="0 GO annotations based on evolutionary models"/>
</dbReference>
<dbReference type="PathwayCommons" id="Q6Q795"/>
<dbReference type="Pharos" id="Q6Q795">
    <property type="development level" value="Tdark"/>
</dbReference>
<dbReference type="Proteomes" id="UP000005640">
    <property type="component" value="Unplaced"/>
</dbReference>
<dbReference type="RNAct" id="Q6Q795">
    <property type="molecule type" value="protein"/>
</dbReference>
<dbReference type="GO" id="GO:0032991">
    <property type="term" value="C:protein-containing complex"/>
    <property type="evidence" value="ECO:0000314"/>
    <property type="project" value="UniProtKB"/>
</dbReference>
<protein>
    <recommendedName>
        <fullName>Putative viral protein-binding protein C1</fullName>
    </recommendedName>
</protein>
<organism>
    <name type="scientific">Homo sapiens</name>
    <name type="common">Human</name>
    <dbReference type="NCBI Taxonomy" id="9606"/>
    <lineage>
        <taxon>Eukaryota</taxon>
        <taxon>Metazoa</taxon>
        <taxon>Chordata</taxon>
        <taxon>Craniata</taxon>
        <taxon>Vertebrata</taxon>
        <taxon>Euteleostomi</taxon>
        <taxon>Mammalia</taxon>
        <taxon>Eutheria</taxon>
        <taxon>Euarchontoglires</taxon>
        <taxon>Primates</taxon>
        <taxon>Haplorrhini</taxon>
        <taxon>Catarrhini</taxon>
        <taxon>Hominidae</taxon>
        <taxon>Homo</taxon>
    </lineage>
</organism>
<feature type="chain" id="PRO_0000326218" description="Putative viral protein-binding protein C1">
    <location>
        <begin position="1"/>
        <end position="121"/>
    </location>
</feature>
<feature type="region of interest" description="Disordered" evidence="1">
    <location>
        <begin position="21"/>
        <end position="57"/>
    </location>
</feature>
<comment type="subunit">
    <text evidence="2">Interacts with core protein of hepatitis B virus.</text>
</comment>
<comment type="caution">
    <text evidence="3">Product of a dubious CDS prediction. This protein is encoded in a genomic region overlapping with the 3'-UTR of GNAI2.</text>
</comment>